<protein>
    <recommendedName>
        <fullName evidence="1">Mycothiol acetyltransferase</fullName>
        <shortName evidence="1">MSH acetyltransferase</shortName>
        <ecNumber evidence="1">2.3.1.189</ecNumber>
    </recommendedName>
    <alternativeName>
        <fullName evidence="1">Mycothiol synthase</fullName>
    </alternativeName>
</protein>
<proteinExistence type="inferred from homology"/>
<evidence type="ECO:0000255" key="1">
    <source>
        <dbReference type="HAMAP-Rule" id="MF_01698"/>
    </source>
</evidence>
<dbReference type="EC" id="2.3.1.189" evidence="1"/>
<dbReference type="EMBL" id="CP002047">
    <property type="protein sequence ID" value="ADI08138.1"/>
    <property type="molecule type" value="Genomic_DNA"/>
</dbReference>
<dbReference type="SMR" id="D7C376"/>
<dbReference type="STRING" id="749414.SBI_05018"/>
<dbReference type="KEGG" id="sbh:SBI_05018"/>
<dbReference type="PATRIC" id="fig|749414.3.peg.5189"/>
<dbReference type="eggNOG" id="COG0454">
    <property type="taxonomic scope" value="Bacteria"/>
</dbReference>
<dbReference type="eggNOG" id="COG0456">
    <property type="taxonomic scope" value="Bacteria"/>
</dbReference>
<dbReference type="HOGENOM" id="CLU_068014_0_0_11"/>
<dbReference type="Proteomes" id="UP000000377">
    <property type="component" value="Chromosome"/>
</dbReference>
<dbReference type="GO" id="GO:0035447">
    <property type="term" value="F:mycothiol synthase activity"/>
    <property type="evidence" value="ECO:0007669"/>
    <property type="project" value="UniProtKB-UniRule"/>
</dbReference>
<dbReference type="GO" id="GO:0010125">
    <property type="term" value="P:mycothiol biosynthetic process"/>
    <property type="evidence" value="ECO:0007669"/>
    <property type="project" value="UniProtKB-UniRule"/>
</dbReference>
<dbReference type="CDD" id="cd04301">
    <property type="entry name" value="NAT_SF"/>
    <property type="match status" value="2"/>
</dbReference>
<dbReference type="Gene3D" id="3.40.630.30">
    <property type="match status" value="1"/>
</dbReference>
<dbReference type="HAMAP" id="MF_01698">
    <property type="entry name" value="MshD"/>
    <property type="match status" value="1"/>
</dbReference>
<dbReference type="InterPro" id="IPR016181">
    <property type="entry name" value="Acyl_CoA_acyltransferase"/>
</dbReference>
<dbReference type="InterPro" id="IPR050832">
    <property type="entry name" value="Bact_Acetyltransf"/>
</dbReference>
<dbReference type="InterPro" id="IPR000182">
    <property type="entry name" value="GNAT_dom"/>
</dbReference>
<dbReference type="InterPro" id="IPR017813">
    <property type="entry name" value="Mycothiol_AcTrfase"/>
</dbReference>
<dbReference type="NCBIfam" id="TIGR03448">
    <property type="entry name" value="mycothiol_MshD"/>
    <property type="match status" value="1"/>
</dbReference>
<dbReference type="PANTHER" id="PTHR43877">
    <property type="entry name" value="AMINOALKYLPHOSPHONATE N-ACETYLTRANSFERASE-RELATED-RELATED"/>
    <property type="match status" value="1"/>
</dbReference>
<dbReference type="Pfam" id="PF00583">
    <property type="entry name" value="Acetyltransf_1"/>
    <property type="match status" value="1"/>
</dbReference>
<dbReference type="Pfam" id="PF13508">
    <property type="entry name" value="Acetyltransf_7"/>
    <property type="match status" value="1"/>
</dbReference>
<dbReference type="PIRSF" id="PIRSF021524">
    <property type="entry name" value="MSH_acetyltransferase"/>
    <property type="match status" value="1"/>
</dbReference>
<dbReference type="SUPFAM" id="SSF55729">
    <property type="entry name" value="Acyl-CoA N-acyltransferases (Nat)"/>
    <property type="match status" value="1"/>
</dbReference>
<dbReference type="PROSITE" id="PS51186">
    <property type="entry name" value="GNAT"/>
    <property type="match status" value="2"/>
</dbReference>
<organism>
    <name type="scientific">Streptomyces bingchenggensis (strain BCW-1)</name>
    <dbReference type="NCBI Taxonomy" id="749414"/>
    <lineage>
        <taxon>Bacteria</taxon>
        <taxon>Bacillati</taxon>
        <taxon>Actinomycetota</taxon>
        <taxon>Actinomycetes</taxon>
        <taxon>Kitasatosporales</taxon>
        <taxon>Streptomycetaceae</taxon>
        <taxon>Streptomyces</taxon>
    </lineage>
</organism>
<sequence>MLNEAAGARRIDVLDEVTPTMAEDVLRLVAEAARTDGQQAVSEQGRLQLRGRREGVRHLLLTEEPSGKLVGYAQLEDTDPVEAPAAELVVHPAHRGQGHGRALGVTLLRESGKRLRVWAHGGHSSARHLAQVLGLTLFRELRQMRRPLGPPATLDIPEPVLPEGVTVRTFRPGEDEAAWLAANAAAFAHHPEQGSLTLRDLEDRMGEPWFDPEGFFLAERGGEIVGFHWTKVHAQERLGEVYVVGVRPEAQGGGLGRSLTAIGLRHLAGRGLPTAMLYVDADNFPAVAVYGRQGFTTYETDLMYRTET</sequence>
<gene>
    <name evidence="1" type="primary">mshD</name>
    <name type="ordered locus">SBI_05018</name>
</gene>
<accession>D7C376</accession>
<keyword id="KW-0012">Acyltransferase</keyword>
<keyword id="KW-1185">Reference proteome</keyword>
<keyword id="KW-0677">Repeat</keyword>
<keyword id="KW-0808">Transferase</keyword>
<comment type="function">
    <text evidence="1">Catalyzes the transfer of acetyl from acetyl-CoA to desacetylmycothiol (Cys-GlcN-Ins) to form mycothiol.</text>
</comment>
<comment type="catalytic activity">
    <reaction evidence="1">
        <text>1D-myo-inositol 2-(L-cysteinylamino)-2-deoxy-alpha-D-glucopyranoside + acetyl-CoA = mycothiol + CoA + H(+)</text>
        <dbReference type="Rhea" id="RHEA:26172"/>
        <dbReference type="ChEBI" id="CHEBI:15378"/>
        <dbReference type="ChEBI" id="CHEBI:16768"/>
        <dbReference type="ChEBI" id="CHEBI:57287"/>
        <dbReference type="ChEBI" id="CHEBI:57288"/>
        <dbReference type="ChEBI" id="CHEBI:58887"/>
        <dbReference type="EC" id="2.3.1.189"/>
    </reaction>
</comment>
<comment type="subunit">
    <text evidence="1">Monomer.</text>
</comment>
<comment type="similarity">
    <text evidence="1">Belongs to the acetyltransferase family. MshD subfamily.</text>
</comment>
<feature type="chain" id="PRO_0000400302" description="Mycothiol acetyltransferase">
    <location>
        <begin position="1"/>
        <end position="308"/>
    </location>
</feature>
<feature type="domain" description="N-acetyltransferase 1" evidence="1">
    <location>
        <begin position="12"/>
        <end position="149"/>
    </location>
</feature>
<feature type="domain" description="N-acetyltransferase 2" evidence="1">
    <location>
        <begin position="165"/>
        <end position="308"/>
    </location>
</feature>
<feature type="binding site" evidence="1">
    <location>
        <position position="43"/>
    </location>
    <ligand>
        <name>1D-myo-inositol 2-(L-cysteinylamino)-2-deoxy-alpha-D-glucopyranoside</name>
        <dbReference type="ChEBI" id="CHEBI:58887"/>
    </ligand>
</feature>
<feature type="binding site" evidence="1">
    <location>
        <begin position="88"/>
        <end position="90"/>
    </location>
    <ligand>
        <name>acetyl-CoA</name>
        <dbReference type="ChEBI" id="CHEBI:57288"/>
        <label>1</label>
    </ligand>
</feature>
<feature type="binding site" evidence="1">
    <location>
        <position position="192"/>
    </location>
    <ligand>
        <name>1D-myo-inositol 2-(L-cysteinylamino)-2-deoxy-alpha-D-glucopyranoside</name>
        <dbReference type="ChEBI" id="CHEBI:58887"/>
    </ligand>
</feature>
<feature type="binding site" evidence="1">
    <location>
        <position position="231"/>
    </location>
    <ligand>
        <name>1D-myo-inositol 2-(L-cysteinylamino)-2-deoxy-alpha-D-glucopyranoside</name>
        <dbReference type="ChEBI" id="CHEBI:58887"/>
    </ligand>
</feature>
<feature type="binding site" evidence="1">
    <location>
        <position position="240"/>
    </location>
    <ligand>
        <name>1D-myo-inositol 2-(L-cysteinylamino)-2-deoxy-alpha-D-glucopyranoside</name>
        <dbReference type="ChEBI" id="CHEBI:58887"/>
    </ligand>
</feature>
<feature type="binding site" evidence="1">
    <location>
        <begin position="244"/>
        <end position="246"/>
    </location>
    <ligand>
        <name>acetyl-CoA</name>
        <dbReference type="ChEBI" id="CHEBI:57288"/>
        <label>2</label>
    </ligand>
</feature>
<feature type="binding site" evidence="1">
    <location>
        <begin position="251"/>
        <end position="257"/>
    </location>
    <ligand>
        <name>acetyl-CoA</name>
        <dbReference type="ChEBI" id="CHEBI:57288"/>
        <label>2</label>
    </ligand>
</feature>
<feature type="binding site" evidence="1">
    <location>
        <position position="278"/>
    </location>
    <ligand>
        <name>1D-myo-inositol 2-(L-cysteinylamino)-2-deoxy-alpha-D-glucopyranoside</name>
        <dbReference type="ChEBI" id="CHEBI:58887"/>
    </ligand>
</feature>
<reference key="1">
    <citation type="journal article" date="2010" name="J. Bacteriol.">
        <title>Genome sequence of the milbemycin-producing bacterium Streptomyces bingchenggensis.</title>
        <authorList>
            <person name="Wang X.J."/>
            <person name="Yan Y.J."/>
            <person name="Zhang B."/>
            <person name="An J."/>
            <person name="Wang J.J."/>
            <person name="Tian J."/>
            <person name="Jiang L."/>
            <person name="Chen Y.H."/>
            <person name="Huang S.X."/>
            <person name="Yin M."/>
            <person name="Zhang J."/>
            <person name="Gao A.L."/>
            <person name="Liu C.X."/>
            <person name="Zhu Z.X."/>
            <person name="Xiang W.S."/>
        </authorList>
    </citation>
    <scope>NUCLEOTIDE SEQUENCE [LARGE SCALE GENOMIC DNA]</scope>
    <source>
        <strain>BCW-1</strain>
    </source>
</reference>
<name>MSHD_STRBB</name>